<dbReference type="EC" id="7.1.1.-" evidence="1"/>
<dbReference type="EMBL" id="CP000774">
    <property type="protein sequence ID" value="ABS64830.1"/>
    <property type="molecule type" value="Genomic_DNA"/>
</dbReference>
<dbReference type="RefSeq" id="WP_012112158.1">
    <property type="nucleotide sequence ID" value="NC_009719.1"/>
</dbReference>
<dbReference type="SMR" id="A7HY47"/>
<dbReference type="STRING" id="402881.Plav_3224"/>
<dbReference type="KEGG" id="pla:Plav_3224"/>
<dbReference type="eggNOG" id="COG0852">
    <property type="taxonomic scope" value="Bacteria"/>
</dbReference>
<dbReference type="HOGENOM" id="CLU_042628_2_1_5"/>
<dbReference type="OrthoDB" id="9803286at2"/>
<dbReference type="Proteomes" id="UP000006377">
    <property type="component" value="Chromosome"/>
</dbReference>
<dbReference type="GO" id="GO:0005886">
    <property type="term" value="C:plasma membrane"/>
    <property type="evidence" value="ECO:0007669"/>
    <property type="project" value="UniProtKB-SubCell"/>
</dbReference>
<dbReference type="GO" id="GO:0008137">
    <property type="term" value="F:NADH dehydrogenase (ubiquinone) activity"/>
    <property type="evidence" value="ECO:0007669"/>
    <property type="project" value="InterPro"/>
</dbReference>
<dbReference type="GO" id="GO:0050136">
    <property type="term" value="F:NADH:ubiquinone reductase (non-electrogenic) activity"/>
    <property type="evidence" value="ECO:0007669"/>
    <property type="project" value="UniProtKB-UniRule"/>
</dbReference>
<dbReference type="GO" id="GO:0048038">
    <property type="term" value="F:quinone binding"/>
    <property type="evidence" value="ECO:0007669"/>
    <property type="project" value="UniProtKB-KW"/>
</dbReference>
<dbReference type="Gene3D" id="3.30.460.80">
    <property type="entry name" value="NADH:ubiquinone oxidoreductase, 30kDa subunit"/>
    <property type="match status" value="1"/>
</dbReference>
<dbReference type="HAMAP" id="MF_01357">
    <property type="entry name" value="NDH1_NuoC"/>
    <property type="match status" value="1"/>
</dbReference>
<dbReference type="InterPro" id="IPR010218">
    <property type="entry name" value="NADH_DH_suC"/>
</dbReference>
<dbReference type="InterPro" id="IPR037232">
    <property type="entry name" value="NADH_quin_OxRdtase_su_C/D-like"/>
</dbReference>
<dbReference type="InterPro" id="IPR001268">
    <property type="entry name" value="NADH_UbQ_OxRdtase_30kDa_su"/>
</dbReference>
<dbReference type="InterPro" id="IPR020396">
    <property type="entry name" value="NADH_UbQ_OxRdtase_CS"/>
</dbReference>
<dbReference type="NCBIfam" id="TIGR01961">
    <property type="entry name" value="NuoC_fam"/>
    <property type="match status" value="1"/>
</dbReference>
<dbReference type="NCBIfam" id="NF004730">
    <property type="entry name" value="PRK06074.1-1"/>
    <property type="match status" value="1"/>
</dbReference>
<dbReference type="NCBIfam" id="NF004733">
    <property type="entry name" value="PRK06074.1-5"/>
    <property type="match status" value="1"/>
</dbReference>
<dbReference type="PANTHER" id="PTHR10884:SF14">
    <property type="entry name" value="NADH DEHYDROGENASE [UBIQUINONE] IRON-SULFUR PROTEIN 3, MITOCHONDRIAL"/>
    <property type="match status" value="1"/>
</dbReference>
<dbReference type="PANTHER" id="PTHR10884">
    <property type="entry name" value="NADH DEHYDROGENASE UBIQUINONE IRON-SULFUR PROTEIN 3"/>
    <property type="match status" value="1"/>
</dbReference>
<dbReference type="Pfam" id="PF00329">
    <property type="entry name" value="Complex1_30kDa"/>
    <property type="match status" value="1"/>
</dbReference>
<dbReference type="SUPFAM" id="SSF143243">
    <property type="entry name" value="Nqo5-like"/>
    <property type="match status" value="1"/>
</dbReference>
<dbReference type="PROSITE" id="PS00542">
    <property type="entry name" value="COMPLEX1_30K"/>
    <property type="match status" value="1"/>
</dbReference>
<keyword id="KW-0997">Cell inner membrane</keyword>
<keyword id="KW-1003">Cell membrane</keyword>
<keyword id="KW-0472">Membrane</keyword>
<keyword id="KW-0520">NAD</keyword>
<keyword id="KW-0874">Quinone</keyword>
<keyword id="KW-1185">Reference proteome</keyword>
<keyword id="KW-1278">Translocase</keyword>
<keyword id="KW-0813">Transport</keyword>
<keyword id="KW-0830">Ubiquinone</keyword>
<reference key="1">
    <citation type="journal article" date="2011" name="Stand. Genomic Sci.">
        <title>Complete genome sequence of Parvibaculum lavamentivorans type strain (DS-1(T)).</title>
        <authorList>
            <person name="Schleheck D."/>
            <person name="Weiss M."/>
            <person name="Pitluck S."/>
            <person name="Bruce D."/>
            <person name="Land M.L."/>
            <person name="Han S."/>
            <person name="Saunders E."/>
            <person name="Tapia R."/>
            <person name="Detter C."/>
            <person name="Brettin T."/>
            <person name="Han J."/>
            <person name="Woyke T."/>
            <person name="Goodwin L."/>
            <person name="Pennacchio L."/>
            <person name="Nolan M."/>
            <person name="Cook A.M."/>
            <person name="Kjelleberg S."/>
            <person name="Thomas T."/>
        </authorList>
    </citation>
    <scope>NUCLEOTIDE SEQUENCE [LARGE SCALE GENOMIC DNA]</scope>
    <source>
        <strain>DS-1 / DSM 13023 / NCIMB 13966</strain>
    </source>
</reference>
<gene>
    <name evidence="1" type="primary">nuoC</name>
    <name type="ordered locus">Plav_3224</name>
</gene>
<proteinExistence type="inferred from homology"/>
<name>NUOC_PARL1</name>
<protein>
    <recommendedName>
        <fullName evidence="1">NADH-quinone oxidoreductase subunit C</fullName>
        <ecNumber evidence="1">7.1.1.-</ecNumber>
    </recommendedName>
    <alternativeName>
        <fullName evidence="1">NADH dehydrogenase I subunit C</fullName>
    </alternativeName>
    <alternativeName>
        <fullName evidence="1">NDH-1 subunit C</fullName>
    </alternativeName>
</protein>
<accession>A7HY47</accession>
<evidence type="ECO:0000255" key="1">
    <source>
        <dbReference type="HAMAP-Rule" id="MF_01357"/>
    </source>
</evidence>
<organism>
    <name type="scientific">Parvibaculum lavamentivorans (strain DS-1 / DSM 13023 / NCIMB 13966)</name>
    <dbReference type="NCBI Taxonomy" id="402881"/>
    <lineage>
        <taxon>Bacteria</taxon>
        <taxon>Pseudomonadati</taxon>
        <taxon>Pseudomonadota</taxon>
        <taxon>Alphaproteobacteria</taxon>
        <taxon>Hyphomicrobiales</taxon>
        <taxon>Parvibaculaceae</taxon>
        <taxon>Parvibaculum</taxon>
    </lineage>
</organism>
<feature type="chain" id="PRO_0000358158" description="NADH-quinone oxidoreductase subunit C">
    <location>
        <begin position="1"/>
        <end position="200"/>
    </location>
</feature>
<sequence>MDESLAELGEHILGTLEESVLGFHVAFGELNVLAQAQSIARVLKFLRDDPACRFGTLLDITAVDYPQRPERFDVVYHLLSMHQNQRIRVTVRTNEETAVPSVVAVYPSANWYERETFDMYGVLFSDHPDLRRILTDYGFNGYPLRKDFPLTGYVEVRYDDDEKRVVYEPVKLVQEFRNFDFMSPWEGAEYLLPGDEKAEH</sequence>
<comment type="function">
    <text evidence="1">NDH-1 shuttles electrons from NADH, via FMN and iron-sulfur (Fe-S) centers, to quinones in the respiratory chain. The immediate electron acceptor for the enzyme in this species is believed to be ubiquinone. Couples the redox reaction to proton translocation (for every two electrons transferred, four hydrogen ions are translocated across the cytoplasmic membrane), and thus conserves the redox energy in a proton gradient.</text>
</comment>
<comment type="catalytic activity">
    <reaction evidence="1">
        <text>a quinone + NADH + 5 H(+)(in) = a quinol + NAD(+) + 4 H(+)(out)</text>
        <dbReference type="Rhea" id="RHEA:57888"/>
        <dbReference type="ChEBI" id="CHEBI:15378"/>
        <dbReference type="ChEBI" id="CHEBI:24646"/>
        <dbReference type="ChEBI" id="CHEBI:57540"/>
        <dbReference type="ChEBI" id="CHEBI:57945"/>
        <dbReference type="ChEBI" id="CHEBI:132124"/>
    </reaction>
</comment>
<comment type="subunit">
    <text evidence="1">NDH-1 is composed of 14 different subunits. Subunits NuoB, C, D, E, F, and G constitute the peripheral sector of the complex.</text>
</comment>
<comment type="subcellular location">
    <subcellularLocation>
        <location evidence="1">Cell inner membrane</location>
        <topology evidence="1">Peripheral membrane protein</topology>
        <orientation evidence="1">Cytoplasmic side</orientation>
    </subcellularLocation>
</comment>
<comment type="similarity">
    <text evidence="1">Belongs to the complex I 30 kDa subunit family.</text>
</comment>